<name>GRAD_GRASX</name>
<dbReference type="GO" id="GO:0005576">
    <property type="term" value="C:extracellular region"/>
    <property type="evidence" value="ECO:0007669"/>
    <property type="project" value="UniProtKB-SubCell"/>
</dbReference>
<dbReference type="GO" id="GO:0090729">
    <property type="term" value="F:toxin activity"/>
    <property type="evidence" value="ECO:0007669"/>
    <property type="project" value="UniProtKB-KW"/>
</dbReference>
<dbReference type="GO" id="GO:0042742">
    <property type="term" value="P:defense response to bacterium"/>
    <property type="evidence" value="ECO:0007669"/>
    <property type="project" value="UniProtKB-KW"/>
</dbReference>
<dbReference type="GO" id="GO:0031640">
    <property type="term" value="P:killing of cells of another organism"/>
    <property type="evidence" value="ECO:0007669"/>
    <property type="project" value="UniProtKB-KW"/>
</dbReference>
<comment type="function">
    <text>Has lytic and hemolytic activities. Its hemolytic activity is inhibited by phospholipids, but not by cholesterol. Has antibacterial activity with a broad spectrum against various species of bacteria including both Gram-positive and Gram-negative groups. Has ichthyotoxic activity.</text>
</comment>
<comment type="subcellular location">
    <subcellularLocation>
        <location>Secreted</location>
    </subcellularLocation>
</comment>
<comment type="tissue specificity">
    <text>Expressed by the skin glands.</text>
</comment>
<comment type="similarity">
    <text evidence="1">Belongs to the grammistin family. Group 2 subfamily.</text>
</comment>
<sequence length="13" mass="1545">FIGGIISFFKRLF</sequence>
<protein>
    <recommendedName>
        <fullName>Grammistin Gs D</fullName>
    </recommendedName>
</protein>
<feature type="peptide" id="PRO_0000044523" description="Grammistin Gs D">
    <location>
        <begin position="1"/>
        <end position="13"/>
    </location>
</feature>
<keyword id="KW-0044">Antibiotic</keyword>
<keyword id="KW-0929">Antimicrobial</keyword>
<keyword id="KW-0204">Cytolysis</keyword>
<keyword id="KW-0903">Direct protein sequencing</keyword>
<keyword id="KW-0354">Hemolysis</keyword>
<keyword id="KW-0964">Secreted</keyword>
<keyword id="KW-0800">Toxin</keyword>
<organism>
    <name type="scientific">Grammistes sexlineatus</name>
    <name type="common">Goldenstriped soapfish</name>
    <name type="synonym">Perca sexlineata</name>
    <dbReference type="NCBI Taxonomy" id="270576"/>
    <lineage>
        <taxon>Eukaryota</taxon>
        <taxon>Metazoa</taxon>
        <taxon>Chordata</taxon>
        <taxon>Craniata</taxon>
        <taxon>Vertebrata</taxon>
        <taxon>Euteleostomi</taxon>
        <taxon>Actinopterygii</taxon>
        <taxon>Neopterygii</taxon>
        <taxon>Teleostei</taxon>
        <taxon>Neoteleostei</taxon>
        <taxon>Acanthomorphata</taxon>
        <taxon>Eupercaria</taxon>
        <taxon>Perciformes</taxon>
        <taxon>Serranoidei</taxon>
        <taxon>Serranidae</taxon>
        <taxon>Epinephelinae</taxon>
        <taxon>Grammistini</taxon>
        <taxon>Grammistes</taxon>
    </lineage>
</organism>
<reference key="1">
    <citation type="journal article" date="2005" name="Toxicon">
        <title>Further isolation and characterization of grammistins from the skin secretion of the soapfish Grammistes sexlineatus.</title>
        <authorList>
            <person name="Sugiyama N."/>
            <person name="Araki M."/>
            <person name="Ishida M."/>
            <person name="Nagashima Y."/>
            <person name="Shiomi K."/>
        </authorList>
    </citation>
    <scope>PROTEIN SEQUENCE</scope>
    <source>
        <tissue>Skin secretion</tissue>
    </source>
</reference>
<proteinExistence type="evidence at protein level"/>
<accession>P69840</accession>
<evidence type="ECO:0000305" key="1"/>